<evidence type="ECO:0000250" key="1"/>
<evidence type="ECO:0000305" key="2"/>
<accession>Q750A5</accession>
<reference key="1">
    <citation type="journal article" date="2004" name="Science">
        <title>The Ashbya gossypii genome as a tool for mapping the ancient Saccharomyces cerevisiae genome.</title>
        <authorList>
            <person name="Dietrich F.S."/>
            <person name="Voegeli S."/>
            <person name="Brachat S."/>
            <person name="Lerch A."/>
            <person name="Gates K."/>
            <person name="Steiner S."/>
            <person name="Mohr C."/>
            <person name="Poehlmann R."/>
            <person name="Luedi P."/>
            <person name="Choi S."/>
            <person name="Wing R.A."/>
            <person name="Flavier A."/>
            <person name="Gaffney T.D."/>
            <person name="Philippsen P."/>
        </authorList>
    </citation>
    <scope>NUCLEOTIDE SEQUENCE [LARGE SCALE GENOMIC DNA]</scope>
    <source>
        <strain>ATCC 10895 / CBS 109.51 / FGSC 9923 / NRRL Y-1056</strain>
    </source>
</reference>
<reference key="2">
    <citation type="journal article" date="2013" name="G3 (Bethesda)">
        <title>Genomes of Ashbya fungi isolated from insects reveal four mating-type loci, numerous translocations, lack of transposons, and distinct gene duplications.</title>
        <authorList>
            <person name="Dietrich F.S."/>
            <person name="Voegeli S."/>
            <person name="Kuo S."/>
            <person name="Philippsen P."/>
        </authorList>
    </citation>
    <scope>GENOME REANNOTATION</scope>
    <source>
        <strain>ATCC 10895 / CBS 109.51 / FGSC 9923 / NRRL Y-1056</strain>
    </source>
</reference>
<organism>
    <name type="scientific">Eremothecium gossypii (strain ATCC 10895 / CBS 109.51 / FGSC 9923 / NRRL Y-1056)</name>
    <name type="common">Yeast</name>
    <name type="synonym">Ashbya gossypii</name>
    <dbReference type="NCBI Taxonomy" id="284811"/>
    <lineage>
        <taxon>Eukaryota</taxon>
        <taxon>Fungi</taxon>
        <taxon>Dikarya</taxon>
        <taxon>Ascomycota</taxon>
        <taxon>Saccharomycotina</taxon>
        <taxon>Saccharomycetes</taxon>
        <taxon>Saccharomycetales</taxon>
        <taxon>Saccharomycetaceae</taxon>
        <taxon>Eremothecium</taxon>
    </lineage>
</organism>
<proteinExistence type="inferred from homology"/>
<gene>
    <name type="primary">REX3</name>
    <name type="ordered locus">AGR052C</name>
</gene>
<feature type="chain" id="PRO_0000120929" description="RNA exonuclease 3">
    <location>
        <begin position="1"/>
        <end position="382"/>
    </location>
</feature>
<feature type="domain" description="Exonuclease">
    <location>
        <begin position="223"/>
        <end position="369"/>
    </location>
</feature>
<comment type="function">
    <text evidence="1">3' to 5' exoribonuclease required for proper 3' end maturation of MRP RNA and of the U5L snRNA.</text>
</comment>
<comment type="subcellular location">
    <subcellularLocation>
        <location evidence="1">Cytoplasm</location>
    </subcellularLocation>
    <subcellularLocation>
        <location evidence="1">Nucleus</location>
    </subcellularLocation>
</comment>
<comment type="similarity">
    <text evidence="2">Belongs to the REXO1/REXO3 family.</text>
</comment>
<keyword id="KW-0963">Cytoplasm</keyword>
<keyword id="KW-0269">Exonuclease</keyword>
<keyword id="KW-0378">Hydrolase</keyword>
<keyword id="KW-0540">Nuclease</keyword>
<keyword id="KW-0539">Nucleus</keyword>
<keyword id="KW-1185">Reference proteome</keyword>
<keyword id="KW-0698">rRNA processing</keyword>
<name>REXO3_EREGS</name>
<protein>
    <recommendedName>
        <fullName>RNA exonuclease 3</fullName>
        <ecNumber>3.1.-.-</ecNumber>
    </recommendedName>
</protein>
<sequence>MAVLRPVDMRMQPAPYEGRMKVIHKILEQLQKYRPRKANLEGLAVQWEHEVAKRSSSKHGYMFNASLLLRDIARHKGNLNRQGRYEAPAPQVSKAEVLAALRNLVLSEQVLSENGYVTAQDALESAAEEKEGLETCVRCLKKFDVRDIMVPTQCQFHVLKEQYNKDMRTFQYRCCGEIGTSCTPFALGCKTLEHHVFRPCTYAAMSKLLPFRNTRGVEGETNVLALDCEMAYTSCGYELIRLTVVEFWTNAVLFDEIVQPLGEIIDLNTQFSGVHEIDRAVAKTFEEAREVFLSPAMINENSILIGHGLENDLNVLRIIHDKIIDTAILYPNGKFKSSLRNLAFQELSRRIQTGEHDSSEDAIAAMDVVKHKLGIPLDRKTW</sequence>
<dbReference type="EC" id="3.1.-.-"/>
<dbReference type="EMBL" id="AE016820">
    <property type="protein sequence ID" value="AAS54541.1"/>
    <property type="molecule type" value="Genomic_DNA"/>
</dbReference>
<dbReference type="RefSeq" id="NP_986717.1">
    <property type="nucleotide sequence ID" value="NM_211779.1"/>
</dbReference>
<dbReference type="SMR" id="Q750A5"/>
<dbReference type="FunCoup" id="Q750A5">
    <property type="interactions" value="99"/>
</dbReference>
<dbReference type="STRING" id="284811.Q750A5"/>
<dbReference type="EnsemblFungi" id="AAS54541">
    <property type="protein sequence ID" value="AAS54541"/>
    <property type="gene ID" value="AGOS_AGR052C"/>
</dbReference>
<dbReference type="GeneID" id="4623018"/>
<dbReference type="KEGG" id="ago:AGOS_AGR052C"/>
<dbReference type="eggNOG" id="KOG2248">
    <property type="taxonomic scope" value="Eukaryota"/>
</dbReference>
<dbReference type="HOGENOM" id="CLU_022453_5_4_1"/>
<dbReference type="InParanoid" id="Q750A5"/>
<dbReference type="OMA" id="IDCEMGF"/>
<dbReference type="OrthoDB" id="3996471at2759"/>
<dbReference type="Proteomes" id="UP000000591">
    <property type="component" value="Chromosome VII"/>
</dbReference>
<dbReference type="GO" id="GO:0005737">
    <property type="term" value="C:cytoplasm"/>
    <property type="evidence" value="ECO:0007669"/>
    <property type="project" value="UniProtKB-SubCell"/>
</dbReference>
<dbReference type="GO" id="GO:0005634">
    <property type="term" value="C:nucleus"/>
    <property type="evidence" value="ECO:0000318"/>
    <property type="project" value="GO_Central"/>
</dbReference>
<dbReference type="GO" id="GO:0000175">
    <property type="term" value="F:3'-5'-RNA exonuclease activity"/>
    <property type="evidence" value="ECO:0007669"/>
    <property type="project" value="EnsemblFungi"/>
</dbReference>
<dbReference type="GO" id="GO:0004527">
    <property type="term" value="F:exonuclease activity"/>
    <property type="evidence" value="ECO:0000318"/>
    <property type="project" value="GO_Central"/>
</dbReference>
<dbReference type="GO" id="GO:0003676">
    <property type="term" value="F:nucleic acid binding"/>
    <property type="evidence" value="ECO:0007669"/>
    <property type="project" value="InterPro"/>
</dbReference>
<dbReference type="GO" id="GO:0000467">
    <property type="term" value="P:exonucleolytic trimming to generate mature 3'-end of 5.8S rRNA from tricistronic rRNA transcript (SSU-rRNA, 5.8S rRNA, LSU-rRNA)"/>
    <property type="evidence" value="ECO:0007669"/>
    <property type="project" value="EnsemblFungi"/>
</dbReference>
<dbReference type="GO" id="GO:0043628">
    <property type="term" value="P:regulatory ncRNA 3'-end processing"/>
    <property type="evidence" value="ECO:0007669"/>
    <property type="project" value="EnsemblFungi"/>
</dbReference>
<dbReference type="GO" id="GO:0031125">
    <property type="term" value="P:rRNA 3'-end processing"/>
    <property type="evidence" value="ECO:0000318"/>
    <property type="project" value="GO_Central"/>
</dbReference>
<dbReference type="GO" id="GO:0034476">
    <property type="term" value="P:U5 snRNA 3'-end processing"/>
    <property type="evidence" value="ECO:0007669"/>
    <property type="project" value="EnsemblFungi"/>
</dbReference>
<dbReference type="CDD" id="cd06145">
    <property type="entry name" value="REX1_like"/>
    <property type="match status" value="1"/>
</dbReference>
<dbReference type="FunFam" id="3.30.420.10:FF:000031">
    <property type="entry name" value="RNA exonuclease 1"/>
    <property type="match status" value="1"/>
</dbReference>
<dbReference type="Gene3D" id="3.30.420.10">
    <property type="entry name" value="Ribonuclease H-like superfamily/Ribonuclease H"/>
    <property type="match status" value="1"/>
</dbReference>
<dbReference type="InterPro" id="IPR013520">
    <property type="entry name" value="Exonuclease_RNaseT/DNA_pol3"/>
</dbReference>
<dbReference type="InterPro" id="IPR034922">
    <property type="entry name" value="REX1-like_exo"/>
</dbReference>
<dbReference type="InterPro" id="IPR047021">
    <property type="entry name" value="REXO1/3/4-like"/>
</dbReference>
<dbReference type="InterPro" id="IPR012337">
    <property type="entry name" value="RNaseH-like_sf"/>
</dbReference>
<dbReference type="InterPro" id="IPR036397">
    <property type="entry name" value="RNaseH_sf"/>
</dbReference>
<dbReference type="PANTHER" id="PTHR12801:SF118">
    <property type="entry name" value="RNA EXONUCLEASE 3"/>
    <property type="match status" value="1"/>
</dbReference>
<dbReference type="PANTHER" id="PTHR12801">
    <property type="entry name" value="RNA EXONUCLEASE REXO1 / RECO3 FAMILY MEMBER-RELATED"/>
    <property type="match status" value="1"/>
</dbReference>
<dbReference type="SMART" id="SM00479">
    <property type="entry name" value="EXOIII"/>
    <property type="match status" value="1"/>
</dbReference>
<dbReference type="SUPFAM" id="SSF53098">
    <property type="entry name" value="Ribonuclease H-like"/>
    <property type="match status" value="1"/>
</dbReference>